<comment type="similarity">
    <text evidence="1">Belongs to the bacterial ribosomal protein bL28 family.</text>
</comment>
<accession>C5C6R3</accession>
<dbReference type="EMBL" id="CP001628">
    <property type="protein sequence ID" value="ACS31401.1"/>
    <property type="molecule type" value="Genomic_DNA"/>
</dbReference>
<dbReference type="RefSeq" id="WP_002858335.1">
    <property type="nucleotide sequence ID" value="NZ_WBMF01000029.1"/>
</dbReference>
<dbReference type="SMR" id="C5C6R3"/>
<dbReference type="STRING" id="465515.Mlut_19190"/>
<dbReference type="EnsemblBacteria" id="ACS31401">
    <property type="protein sequence ID" value="ACS31401"/>
    <property type="gene ID" value="Mlut_19190"/>
</dbReference>
<dbReference type="GeneID" id="93364089"/>
<dbReference type="KEGG" id="mlu:Mlut_19190"/>
<dbReference type="eggNOG" id="COG0227">
    <property type="taxonomic scope" value="Bacteria"/>
</dbReference>
<dbReference type="HOGENOM" id="CLU_064548_3_1_11"/>
<dbReference type="Proteomes" id="UP000000738">
    <property type="component" value="Chromosome"/>
</dbReference>
<dbReference type="GO" id="GO:1990904">
    <property type="term" value="C:ribonucleoprotein complex"/>
    <property type="evidence" value="ECO:0007669"/>
    <property type="project" value="UniProtKB-KW"/>
</dbReference>
<dbReference type="GO" id="GO:0005840">
    <property type="term" value="C:ribosome"/>
    <property type="evidence" value="ECO:0007669"/>
    <property type="project" value="UniProtKB-KW"/>
</dbReference>
<dbReference type="GO" id="GO:0003735">
    <property type="term" value="F:structural constituent of ribosome"/>
    <property type="evidence" value="ECO:0007669"/>
    <property type="project" value="InterPro"/>
</dbReference>
<dbReference type="GO" id="GO:0006412">
    <property type="term" value="P:translation"/>
    <property type="evidence" value="ECO:0007669"/>
    <property type="project" value="UniProtKB-UniRule"/>
</dbReference>
<dbReference type="FunFam" id="2.30.170.40:FF:000001">
    <property type="entry name" value="50S ribosomal protein L28"/>
    <property type="match status" value="1"/>
</dbReference>
<dbReference type="Gene3D" id="2.30.170.40">
    <property type="entry name" value="Ribosomal protein L28/L24"/>
    <property type="match status" value="1"/>
</dbReference>
<dbReference type="HAMAP" id="MF_00373">
    <property type="entry name" value="Ribosomal_bL28"/>
    <property type="match status" value="1"/>
</dbReference>
<dbReference type="InterPro" id="IPR026569">
    <property type="entry name" value="Ribosomal_bL28"/>
</dbReference>
<dbReference type="InterPro" id="IPR034704">
    <property type="entry name" value="Ribosomal_bL28/bL31-like_sf"/>
</dbReference>
<dbReference type="InterPro" id="IPR001383">
    <property type="entry name" value="Ribosomal_bL28_bact-type"/>
</dbReference>
<dbReference type="InterPro" id="IPR037147">
    <property type="entry name" value="Ribosomal_bL28_sf"/>
</dbReference>
<dbReference type="NCBIfam" id="TIGR00009">
    <property type="entry name" value="L28"/>
    <property type="match status" value="1"/>
</dbReference>
<dbReference type="PANTHER" id="PTHR13528">
    <property type="entry name" value="39S RIBOSOMAL PROTEIN L28, MITOCHONDRIAL"/>
    <property type="match status" value="1"/>
</dbReference>
<dbReference type="PANTHER" id="PTHR13528:SF2">
    <property type="entry name" value="LARGE RIBOSOMAL SUBUNIT PROTEIN BL28M"/>
    <property type="match status" value="1"/>
</dbReference>
<dbReference type="Pfam" id="PF00830">
    <property type="entry name" value="Ribosomal_L28"/>
    <property type="match status" value="1"/>
</dbReference>
<dbReference type="SUPFAM" id="SSF143800">
    <property type="entry name" value="L28p-like"/>
    <property type="match status" value="1"/>
</dbReference>
<gene>
    <name evidence="1" type="primary">rpmB</name>
    <name type="ordered locus">Mlut_19190</name>
</gene>
<protein>
    <recommendedName>
        <fullName evidence="1">Large ribosomal subunit protein bL28</fullName>
    </recommendedName>
    <alternativeName>
        <fullName evidence="3">50S ribosomal protein L28</fullName>
    </alternativeName>
</protein>
<proteinExistence type="inferred from homology"/>
<keyword id="KW-1185">Reference proteome</keyword>
<keyword id="KW-0687">Ribonucleoprotein</keyword>
<keyword id="KW-0689">Ribosomal protein</keyword>
<evidence type="ECO:0000255" key="1">
    <source>
        <dbReference type="HAMAP-Rule" id="MF_00373"/>
    </source>
</evidence>
<evidence type="ECO:0000256" key="2">
    <source>
        <dbReference type="SAM" id="MobiDB-lite"/>
    </source>
</evidence>
<evidence type="ECO:0000305" key="3"/>
<name>RL28_MICLC</name>
<organism>
    <name type="scientific">Micrococcus luteus (strain ATCC 4698 / DSM 20030 / JCM 1464 / CCM 169 / CCUG 5858 / IAM 1056 / NBRC 3333 / NCIMB 9278 / NCTC 2665 / VKM Ac-2230)</name>
    <name type="common">Micrococcus lysodeikticus</name>
    <dbReference type="NCBI Taxonomy" id="465515"/>
    <lineage>
        <taxon>Bacteria</taxon>
        <taxon>Bacillati</taxon>
        <taxon>Actinomycetota</taxon>
        <taxon>Actinomycetes</taxon>
        <taxon>Micrococcales</taxon>
        <taxon>Micrococcaceae</taxon>
        <taxon>Micrococcus</taxon>
    </lineage>
</organism>
<feature type="chain" id="PRO_1000205606" description="Large ribosomal subunit protein bL28">
    <location>
        <begin position="1"/>
        <end position="78"/>
    </location>
</feature>
<feature type="region of interest" description="Disordered" evidence="2">
    <location>
        <begin position="1"/>
        <end position="30"/>
    </location>
</feature>
<sequence length="78" mass="8549">MAAHCQVTGAGPGFGHSISHSHRRTKRRFDPNIQKKTYWVPSLRRNVTLTLSAKGIKTIDVRGIDAVVADLIAKGVKL</sequence>
<reference key="1">
    <citation type="journal article" date="2010" name="J. Bacteriol.">
        <title>Genome sequence of the Fleming strain of Micrococcus luteus, a simple free-living actinobacterium.</title>
        <authorList>
            <person name="Young M."/>
            <person name="Artsatbanov V."/>
            <person name="Beller H.R."/>
            <person name="Chandra G."/>
            <person name="Chater K.F."/>
            <person name="Dover L.G."/>
            <person name="Goh E.B."/>
            <person name="Kahan T."/>
            <person name="Kaprelyants A.S."/>
            <person name="Kyrpides N."/>
            <person name="Lapidus A."/>
            <person name="Lowry S.R."/>
            <person name="Lykidis A."/>
            <person name="Mahillon J."/>
            <person name="Markowitz V."/>
            <person name="Mavromatis K."/>
            <person name="Mukamolova G.V."/>
            <person name="Oren A."/>
            <person name="Rokem J.S."/>
            <person name="Smith M.C."/>
            <person name="Young D.I."/>
            <person name="Greenblatt C.L."/>
        </authorList>
    </citation>
    <scope>NUCLEOTIDE SEQUENCE [LARGE SCALE GENOMIC DNA]</scope>
    <source>
        <strain>ATCC 4698 / DSM 20030 / JCM 1464 / CCM 169 / CCUG 5858 / IAM 1056 / NBRC 3333 / NCIMB 9278 / NCTC 2665 / VKM Ac-2230</strain>
    </source>
</reference>